<keyword id="KW-1185">Reference proteome</keyword>
<evidence type="ECO:0000255" key="1">
    <source>
        <dbReference type="HAMAP-Rule" id="MF_01297"/>
    </source>
</evidence>
<evidence type="ECO:0000256" key="2">
    <source>
        <dbReference type="SAM" id="MobiDB-lite"/>
    </source>
</evidence>
<evidence type="ECO:0000305" key="3"/>
<protein>
    <recommendedName>
        <fullName evidence="3">Ferric nitrobindin-like protein</fullName>
    </recommendedName>
</protein>
<dbReference type="EMBL" id="U15182">
    <property type="protein sequence ID" value="AAA62973.1"/>
    <property type="status" value="ALT_INIT"/>
    <property type="molecule type" value="Genomic_DNA"/>
</dbReference>
<dbReference type="EMBL" id="AL583924">
    <property type="protein sequence ID" value="CAC31155.1"/>
    <property type="molecule type" value="Genomic_DNA"/>
</dbReference>
<dbReference type="PIR" id="C87184">
    <property type="entry name" value="C87184"/>
</dbReference>
<dbReference type="RefSeq" id="NP_302442.1">
    <property type="nucleotide sequence ID" value="NC_002677.1"/>
</dbReference>
<dbReference type="RefSeq" id="WP_010908762.1">
    <property type="nucleotide sequence ID" value="NC_002677.1"/>
</dbReference>
<dbReference type="SMR" id="Q9CBC6"/>
<dbReference type="STRING" id="272631.gene:17576057"/>
<dbReference type="KEGG" id="mle:ML2200"/>
<dbReference type="PATRIC" id="fig|272631.5.peg.4168"/>
<dbReference type="Leproma" id="ML2200"/>
<dbReference type="eggNOG" id="COG4044">
    <property type="taxonomic scope" value="Bacteria"/>
</dbReference>
<dbReference type="HOGENOM" id="CLU_085483_0_0_11"/>
<dbReference type="OrthoDB" id="4804006at2"/>
<dbReference type="Proteomes" id="UP000000806">
    <property type="component" value="Chromosome"/>
</dbReference>
<dbReference type="CDD" id="cd07828">
    <property type="entry name" value="lipocalin_heme-bd-THAP4-like"/>
    <property type="match status" value="1"/>
</dbReference>
<dbReference type="Gene3D" id="2.40.128.20">
    <property type="match status" value="1"/>
</dbReference>
<dbReference type="HAMAP" id="MF_01297">
    <property type="entry name" value="nitrobindin"/>
    <property type="match status" value="1"/>
</dbReference>
<dbReference type="InterPro" id="IPR012674">
    <property type="entry name" value="Calycin"/>
</dbReference>
<dbReference type="InterPro" id="IPR022939">
    <property type="entry name" value="Nb(III)_bact/plant"/>
</dbReference>
<dbReference type="InterPro" id="IPR045165">
    <property type="entry name" value="Nitrobindin"/>
</dbReference>
<dbReference type="InterPro" id="IPR014878">
    <property type="entry name" value="THAP4-like_heme-bd"/>
</dbReference>
<dbReference type="PANTHER" id="PTHR15854:SF4">
    <property type="entry name" value="PEROXYNITRITE ISOMERASE THAP4"/>
    <property type="match status" value="1"/>
</dbReference>
<dbReference type="PANTHER" id="PTHR15854">
    <property type="entry name" value="THAP4 PROTEIN"/>
    <property type="match status" value="1"/>
</dbReference>
<dbReference type="Pfam" id="PF08768">
    <property type="entry name" value="THAP4_heme-bd"/>
    <property type="match status" value="1"/>
</dbReference>
<dbReference type="SUPFAM" id="SSF50814">
    <property type="entry name" value="Lipocalins"/>
    <property type="match status" value="1"/>
</dbReference>
<feature type="chain" id="PRO_0000356920" description="Ferric nitrobindin-like protein">
    <location>
        <begin position="1"/>
        <end position="228"/>
    </location>
</feature>
<feature type="region of interest" description="Disordered" evidence="2">
    <location>
        <begin position="1"/>
        <end position="21"/>
    </location>
</feature>
<feature type="short sequence motif" description="GXWXGXG" evidence="1">
    <location>
        <begin position="75"/>
        <end position="81"/>
    </location>
</feature>
<proteinExistence type="inferred from homology"/>
<sequence length="228" mass="24521">MTSDEVRDGAGSPADSSKGNKCTAAGMFQAAKRSTVSAARNIPAFDDLPVPSDTANLREGANLNSTLLALLPLVGVWRGEGEGRGPNGDYHFGQQIVVSHDGGNYLNWEARSWRLNDAGEYQETSLRETGFWRFVSDPYDPTESQAIELLLAHSAGYVELFYGRPRNASSWELVTDALACSKSGVLVGGAKRLYGIVEGGDLAYVEERVDADGGLVPNLSARLYRFAG</sequence>
<name>NBLIK_MYCLE</name>
<comment type="similarity">
    <text evidence="1">Belongs to the nitrobindin family.</text>
</comment>
<comment type="caution">
    <text evidence="3">Lacks the conserved His residue that binds heme iron in the nitrobindin family.</text>
</comment>
<comment type="sequence caution" evidence="3">
    <conflict type="erroneous initiation">
        <sequence resource="EMBL-CDS" id="AAA62973"/>
    </conflict>
</comment>
<accession>Q9CBC6</accession>
<accession>Q50034</accession>
<reference key="1">
    <citation type="submission" date="1995-04" db="EMBL/GenBank/DDBJ databases">
        <authorList>
            <person name="Smith D.R."/>
            <person name="Robison K."/>
        </authorList>
    </citation>
    <scope>NUCLEOTIDE SEQUENCE [GENOMIC DNA]</scope>
</reference>
<reference key="2">
    <citation type="journal article" date="2001" name="Nature">
        <title>Massive gene decay in the leprosy bacillus.</title>
        <authorList>
            <person name="Cole S.T."/>
            <person name="Eiglmeier K."/>
            <person name="Parkhill J."/>
            <person name="James K.D."/>
            <person name="Thomson N.R."/>
            <person name="Wheeler P.R."/>
            <person name="Honore N."/>
            <person name="Garnier T."/>
            <person name="Churcher C.M."/>
            <person name="Harris D.E."/>
            <person name="Mungall K.L."/>
            <person name="Basham D."/>
            <person name="Brown D."/>
            <person name="Chillingworth T."/>
            <person name="Connor R."/>
            <person name="Davies R.M."/>
            <person name="Devlin K."/>
            <person name="Duthoy S."/>
            <person name="Feltwell T."/>
            <person name="Fraser A."/>
            <person name="Hamlin N."/>
            <person name="Holroyd S."/>
            <person name="Hornsby T."/>
            <person name="Jagels K."/>
            <person name="Lacroix C."/>
            <person name="Maclean J."/>
            <person name="Moule S."/>
            <person name="Murphy L.D."/>
            <person name="Oliver K."/>
            <person name="Quail M.A."/>
            <person name="Rajandream M.A."/>
            <person name="Rutherford K.M."/>
            <person name="Rutter S."/>
            <person name="Seeger K."/>
            <person name="Simon S."/>
            <person name="Simmonds M."/>
            <person name="Skelton J."/>
            <person name="Squares R."/>
            <person name="Squares S."/>
            <person name="Stevens K."/>
            <person name="Taylor K."/>
            <person name="Whitehead S."/>
            <person name="Woodward J.R."/>
            <person name="Barrell B.G."/>
        </authorList>
    </citation>
    <scope>NUCLEOTIDE SEQUENCE [LARGE SCALE GENOMIC DNA]</scope>
    <source>
        <strain>TN</strain>
    </source>
</reference>
<gene>
    <name type="ordered locus">ML2200</name>
</gene>
<organism>
    <name type="scientific">Mycobacterium leprae (strain TN)</name>
    <dbReference type="NCBI Taxonomy" id="272631"/>
    <lineage>
        <taxon>Bacteria</taxon>
        <taxon>Bacillati</taxon>
        <taxon>Actinomycetota</taxon>
        <taxon>Actinomycetes</taxon>
        <taxon>Mycobacteriales</taxon>
        <taxon>Mycobacteriaceae</taxon>
        <taxon>Mycobacterium</taxon>
    </lineage>
</organism>